<name>CH10_STRCO</name>
<accession>P0A345</accession>
<accession>P40172</accession>
<comment type="function">
    <text evidence="1">Together with the chaperonin GroEL, plays an essential role in assisting protein folding. The GroEL-GroES system forms a nano-cage that allows encapsulation of the non-native substrate proteins and provides a physical environment optimized to promote and accelerate protein folding. GroES binds to the apical surface of the GroEL ring, thereby capping the opening of the GroEL channel.</text>
</comment>
<comment type="subunit">
    <text evidence="1">Heptamer of 7 subunits arranged in a ring. Interacts with the chaperonin GroEL.</text>
</comment>
<comment type="subcellular location">
    <subcellularLocation>
        <location evidence="1">Cytoplasm</location>
    </subcellularLocation>
</comment>
<comment type="similarity">
    <text evidence="1 2">Belongs to the GroES chaperonin family.</text>
</comment>
<dbReference type="EMBL" id="X75206">
    <property type="protein sequence ID" value="CAA53018.1"/>
    <property type="molecule type" value="Genomic_DNA"/>
</dbReference>
<dbReference type="EMBL" id="AL939121">
    <property type="protein sequence ID" value="CAA20417.1"/>
    <property type="molecule type" value="Genomic_DNA"/>
</dbReference>
<dbReference type="PIR" id="S37565">
    <property type="entry name" value="S37565"/>
</dbReference>
<dbReference type="RefSeq" id="NP_628919.1">
    <property type="nucleotide sequence ID" value="NC_003888.3"/>
</dbReference>
<dbReference type="RefSeq" id="WP_003974211.1">
    <property type="nucleotide sequence ID" value="NZ_VNID01000016.1"/>
</dbReference>
<dbReference type="SMR" id="P0A345"/>
<dbReference type="FunCoup" id="P0A345">
    <property type="interactions" value="345"/>
</dbReference>
<dbReference type="STRING" id="100226.gene:17762410"/>
<dbReference type="PaxDb" id="100226-SCO4761"/>
<dbReference type="GeneID" id="97462897"/>
<dbReference type="KEGG" id="sco:SCO4761"/>
<dbReference type="PATRIC" id="fig|100226.15.peg.4833"/>
<dbReference type="eggNOG" id="COG0234">
    <property type="taxonomic scope" value="Bacteria"/>
</dbReference>
<dbReference type="HOGENOM" id="CLU_132825_2_0_11"/>
<dbReference type="InParanoid" id="P0A345"/>
<dbReference type="OrthoDB" id="9806791at2"/>
<dbReference type="PhylomeDB" id="P0A345"/>
<dbReference type="Proteomes" id="UP000001973">
    <property type="component" value="Chromosome"/>
</dbReference>
<dbReference type="GO" id="GO:0005737">
    <property type="term" value="C:cytoplasm"/>
    <property type="evidence" value="ECO:0007669"/>
    <property type="project" value="UniProtKB-SubCell"/>
</dbReference>
<dbReference type="GO" id="GO:0005524">
    <property type="term" value="F:ATP binding"/>
    <property type="evidence" value="ECO:0007669"/>
    <property type="project" value="InterPro"/>
</dbReference>
<dbReference type="GO" id="GO:0046872">
    <property type="term" value="F:metal ion binding"/>
    <property type="evidence" value="ECO:0000318"/>
    <property type="project" value="GO_Central"/>
</dbReference>
<dbReference type="GO" id="GO:0044183">
    <property type="term" value="F:protein folding chaperone"/>
    <property type="evidence" value="ECO:0007669"/>
    <property type="project" value="InterPro"/>
</dbReference>
<dbReference type="GO" id="GO:0051087">
    <property type="term" value="F:protein-folding chaperone binding"/>
    <property type="evidence" value="ECO:0000318"/>
    <property type="project" value="GO_Central"/>
</dbReference>
<dbReference type="GO" id="GO:0051082">
    <property type="term" value="F:unfolded protein binding"/>
    <property type="evidence" value="ECO:0000318"/>
    <property type="project" value="GO_Central"/>
</dbReference>
<dbReference type="GO" id="GO:0051085">
    <property type="term" value="P:chaperone cofactor-dependent protein refolding"/>
    <property type="evidence" value="ECO:0000318"/>
    <property type="project" value="GO_Central"/>
</dbReference>
<dbReference type="CDD" id="cd00320">
    <property type="entry name" value="cpn10"/>
    <property type="match status" value="1"/>
</dbReference>
<dbReference type="FunFam" id="2.30.33.40:FF:000001">
    <property type="entry name" value="10 kDa chaperonin"/>
    <property type="match status" value="1"/>
</dbReference>
<dbReference type="Gene3D" id="2.30.33.40">
    <property type="entry name" value="GroES chaperonin"/>
    <property type="match status" value="1"/>
</dbReference>
<dbReference type="HAMAP" id="MF_00580">
    <property type="entry name" value="CH10"/>
    <property type="match status" value="1"/>
</dbReference>
<dbReference type="InterPro" id="IPR020818">
    <property type="entry name" value="Chaperonin_GroES"/>
</dbReference>
<dbReference type="InterPro" id="IPR037124">
    <property type="entry name" value="Chaperonin_GroES_sf"/>
</dbReference>
<dbReference type="InterPro" id="IPR018369">
    <property type="entry name" value="Chaprnonin_Cpn10_CS"/>
</dbReference>
<dbReference type="InterPro" id="IPR011032">
    <property type="entry name" value="GroES-like_sf"/>
</dbReference>
<dbReference type="NCBIfam" id="NF001530">
    <property type="entry name" value="PRK00364.1-6"/>
    <property type="match status" value="1"/>
</dbReference>
<dbReference type="NCBIfam" id="NF001531">
    <property type="entry name" value="PRK00364.2-2"/>
    <property type="match status" value="1"/>
</dbReference>
<dbReference type="NCBIfam" id="NF001533">
    <property type="entry name" value="PRK00364.2-4"/>
    <property type="match status" value="1"/>
</dbReference>
<dbReference type="NCBIfam" id="NF001534">
    <property type="entry name" value="PRK00364.2-5"/>
    <property type="match status" value="1"/>
</dbReference>
<dbReference type="PANTHER" id="PTHR10772">
    <property type="entry name" value="10 KDA HEAT SHOCK PROTEIN"/>
    <property type="match status" value="1"/>
</dbReference>
<dbReference type="PANTHER" id="PTHR10772:SF58">
    <property type="entry name" value="CO-CHAPERONIN GROES"/>
    <property type="match status" value="1"/>
</dbReference>
<dbReference type="Pfam" id="PF00166">
    <property type="entry name" value="Cpn10"/>
    <property type="match status" value="1"/>
</dbReference>
<dbReference type="PRINTS" id="PR00297">
    <property type="entry name" value="CHAPERONIN10"/>
</dbReference>
<dbReference type="SMART" id="SM00883">
    <property type="entry name" value="Cpn10"/>
    <property type="match status" value="1"/>
</dbReference>
<dbReference type="SUPFAM" id="SSF50129">
    <property type="entry name" value="GroES-like"/>
    <property type="match status" value="1"/>
</dbReference>
<dbReference type="PROSITE" id="PS00681">
    <property type="entry name" value="CHAPERONINS_CPN10"/>
    <property type="match status" value="1"/>
</dbReference>
<feature type="chain" id="PRO_0000174858" description="Co-chaperonin GroES">
    <location>
        <begin position="1"/>
        <end position="102"/>
    </location>
</feature>
<protein>
    <recommendedName>
        <fullName evidence="1">Co-chaperonin GroES</fullName>
    </recommendedName>
    <alternativeName>
        <fullName evidence="1">10 kDa chaperonin</fullName>
    </alternativeName>
    <alternativeName>
        <fullName evidence="1">Chaperonin-10</fullName>
        <shortName evidence="1">Cpn10</shortName>
    </alternativeName>
</protein>
<sequence length="102" mass="10946">MTTTSSKVAIKPLEDRIVVQPLDAEQTTASGLVIPDTAKEKPQEGVVLAVGPGRFEDGNRLPLDVSVGDVVLYSKYGGTEVKYNGEEYLVLSARDVLAIVEK</sequence>
<evidence type="ECO:0000255" key="1">
    <source>
        <dbReference type="HAMAP-Rule" id="MF_00580"/>
    </source>
</evidence>
<evidence type="ECO:0000305" key="2"/>
<proteinExistence type="inferred from homology"/>
<reference key="1">
    <citation type="journal article" date="1994" name="Gene">
        <title>Characterization of two groEL genes in Streptomyces coelicolor A3(2).</title>
        <authorList>
            <person name="Duchene A.M."/>
            <person name="Kieser H.M."/>
            <person name="Hopwood D.A."/>
            <person name="Thompson C.J."/>
            <person name="Mazodier P."/>
        </authorList>
    </citation>
    <scope>NUCLEOTIDE SEQUENCE [GENOMIC DNA]</scope>
    <source>
        <strain>A3(2) / J1501</strain>
    </source>
</reference>
<reference key="2">
    <citation type="journal article" date="2002" name="Nature">
        <title>Complete genome sequence of the model actinomycete Streptomyces coelicolor A3(2).</title>
        <authorList>
            <person name="Bentley S.D."/>
            <person name="Chater K.F."/>
            <person name="Cerdeno-Tarraga A.-M."/>
            <person name="Challis G.L."/>
            <person name="Thomson N.R."/>
            <person name="James K.D."/>
            <person name="Harris D.E."/>
            <person name="Quail M.A."/>
            <person name="Kieser H."/>
            <person name="Harper D."/>
            <person name="Bateman A."/>
            <person name="Brown S."/>
            <person name="Chandra G."/>
            <person name="Chen C.W."/>
            <person name="Collins M."/>
            <person name="Cronin A."/>
            <person name="Fraser A."/>
            <person name="Goble A."/>
            <person name="Hidalgo J."/>
            <person name="Hornsby T."/>
            <person name="Howarth S."/>
            <person name="Huang C.-H."/>
            <person name="Kieser T."/>
            <person name="Larke L."/>
            <person name="Murphy L.D."/>
            <person name="Oliver K."/>
            <person name="O'Neil S."/>
            <person name="Rabbinowitsch E."/>
            <person name="Rajandream M.A."/>
            <person name="Rutherford K.M."/>
            <person name="Rutter S."/>
            <person name="Seeger K."/>
            <person name="Saunders D."/>
            <person name="Sharp S."/>
            <person name="Squares R."/>
            <person name="Squares S."/>
            <person name="Taylor K."/>
            <person name="Warren T."/>
            <person name="Wietzorrek A."/>
            <person name="Woodward J.R."/>
            <person name="Barrell B.G."/>
            <person name="Parkhill J."/>
            <person name="Hopwood D.A."/>
        </authorList>
    </citation>
    <scope>NUCLEOTIDE SEQUENCE [LARGE SCALE GENOMIC DNA]</scope>
    <source>
        <strain>ATCC BAA-471 / A3(2) / M145</strain>
    </source>
</reference>
<keyword id="KW-0143">Chaperone</keyword>
<keyword id="KW-0963">Cytoplasm</keyword>
<keyword id="KW-1185">Reference proteome</keyword>
<organism>
    <name type="scientific">Streptomyces coelicolor (strain ATCC BAA-471 / A3(2) / M145)</name>
    <dbReference type="NCBI Taxonomy" id="100226"/>
    <lineage>
        <taxon>Bacteria</taxon>
        <taxon>Bacillati</taxon>
        <taxon>Actinomycetota</taxon>
        <taxon>Actinomycetes</taxon>
        <taxon>Kitasatosporales</taxon>
        <taxon>Streptomycetaceae</taxon>
        <taxon>Streptomyces</taxon>
        <taxon>Streptomyces albidoflavus group</taxon>
    </lineage>
</organism>
<gene>
    <name evidence="1" type="primary">groES</name>
    <name evidence="1" type="synonym">groS</name>
    <name type="ordered locus">SCO4761</name>
    <name type="ORF">SC6G4.39</name>
</gene>